<organism>
    <name type="scientific">Botryotinia fuckeliana (strain B05.10)</name>
    <name type="common">Noble rot fungus</name>
    <name type="synonym">Botrytis cinerea</name>
    <dbReference type="NCBI Taxonomy" id="332648"/>
    <lineage>
        <taxon>Eukaryota</taxon>
        <taxon>Fungi</taxon>
        <taxon>Dikarya</taxon>
        <taxon>Ascomycota</taxon>
        <taxon>Pezizomycotina</taxon>
        <taxon>Leotiomycetes</taxon>
        <taxon>Helotiales</taxon>
        <taxon>Sclerotiniaceae</taxon>
        <taxon>Botrytis</taxon>
    </lineage>
</organism>
<proteinExistence type="inferred from homology"/>
<evidence type="ECO:0000250" key="1"/>
<evidence type="ECO:0000255" key="2">
    <source>
        <dbReference type="PROSITE-ProRule" id="PRU10095"/>
    </source>
</evidence>
<evidence type="ECO:0000256" key="3">
    <source>
        <dbReference type="SAM" id="MobiDB-lite"/>
    </source>
</evidence>
<evidence type="ECO:0000305" key="4"/>
<name>ATP23_BOTFB</name>
<accession>A6SSS5</accession>
<accession>A0A384K678</accession>
<gene>
    <name type="primary">atp23</name>
    <name type="ORF">BC1G_15820</name>
    <name type="ORF">BCIN_16g01380</name>
</gene>
<keyword id="KW-0378">Hydrolase</keyword>
<keyword id="KW-0472">Membrane</keyword>
<keyword id="KW-0479">Metal-binding</keyword>
<keyword id="KW-0482">Metalloprotease</keyword>
<keyword id="KW-0496">Mitochondrion</keyword>
<keyword id="KW-0999">Mitochondrion inner membrane</keyword>
<keyword id="KW-0645">Protease</keyword>
<keyword id="KW-1185">Reference proteome</keyword>
<dbReference type="EC" id="3.4.24.-"/>
<dbReference type="EMBL" id="CP009820">
    <property type="protein sequence ID" value="ATZ58318.1"/>
    <property type="molecule type" value="Genomic_DNA"/>
</dbReference>
<dbReference type="MEROPS" id="M76.002"/>
<dbReference type="EnsemblFungi" id="Bcin16g01380.1">
    <property type="protein sequence ID" value="Bcin16p01380.1"/>
    <property type="gene ID" value="Bcin16g01380"/>
</dbReference>
<dbReference type="VEuPathDB" id="FungiDB:Bcin16g01380"/>
<dbReference type="OrthoDB" id="285308at2759"/>
<dbReference type="Proteomes" id="UP000001798">
    <property type="component" value="Chromosome bcin16"/>
</dbReference>
<dbReference type="GO" id="GO:0005743">
    <property type="term" value="C:mitochondrial inner membrane"/>
    <property type="evidence" value="ECO:0007669"/>
    <property type="project" value="UniProtKB-SubCell"/>
</dbReference>
<dbReference type="GO" id="GO:0046872">
    <property type="term" value="F:metal ion binding"/>
    <property type="evidence" value="ECO:0007669"/>
    <property type="project" value="UniProtKB-KW"/>
</dbReference>
<dbReference type="GO" id="GO:0004222">
    <property type="term" value="F:metalloendopeptidase activity"/>
    <property type="evidence" value="ECO:0007669"/>
    <property type="project" value="InterPro"/>
</dbReference>
<dbReference type="GO" id="GO:0034982">
    <property type="term" value="P:mitochondrial protein processing"/>
    <property type="evidence" value="ECO:0007669"/>
    <property type="project" value="TreeGrafter"/>
</dbReference>
<dbReference type="GO" id="GO:0033615">
    <property type="term" value="P:mitochondrial proton-transporting ATP synthase complex assembly"/>
    <property type="evidence" value="ECO:0007669"/>
    <property type="project" value="TreeGrafter"/>
</dbReference>
<dbReference type="InterPro" id="IPR019165">
    <property type="entry name" value="Peptidase_M76_ATP23"/>
</dbReference>
<dbReference type="PANTHER" id="PTHR21711">
    <property type="entry name" value="MITOCHONDRIAL INNER MEMBRANE PROTEASE"/>
    <property type="match status" value="1"/>
</dbReference>
<dbReference type="PANTHER" id="PTHR21711:SF0">
    <property type="entry name" value="MITOCHONDRIAL INNER MEMBRANE PROTEASE ATP23 HOMOLOG"/>
    <property type="match status" value="1"/>
</dbReference>
<dbReference type="Pfam" id="PF09768">
    <property type="entry name" value="Peptidase_M76"/>
    <property type="match status" value="1"/>
</dbReference>
<dbReference type="PROSITE" id="PS00142">
    <property type="entry name" value="ZINC_PROTEASE"/>
    <property type="match status" value="1"/>
</dbReference>
<sequence>MSSSEGNKPPLVPDSTKESEPQFDPTARTRNWFSILLGTMPPSHQILYREDQYARHEKRDCDRCEEWRDYNLKYSPIVIFMQKNIRDLNGKLDADNIRCRRCPTRITEDGKTVRQGGGFSPEHGIQLCANEMRDSKHVEDTLAHEMVHAWDHLRWKVDWGDLRHAACSEIRAASLSGECRWAREFWTRNNYRVTQQHQDCVRRRAVKSVLARPWCKDDVQAVRVVNEVWDSCYSDTRPFDEIYK</sequence>
<protein>
    <recommendedName>
        <fullName>Mitochondrial inner membrane protease atp23</fullName>
        <ecNumber>3.4.24.-</ecNumber>
    </recommendedName>
</protein>
<reference key="1">
    <citation type="journal article" date="2011" name="PLoS Genet.">
        <title>Genomic analysis of the necrotrophic fungal pathogens Sclerotinia sclerotiorum and Botrytis cinerea.</title>
        <authorList>
            <person name="Amselem J."/>
            <person name="Cuomo C.A."/>
            <person name="van Kan J.A.L."/>
            <person name="Viaud M."/>
            <person name="Benito E.P."/>
            <person name="Couloux A."/>
            <person name="Coutinho P.M."/>
            <person name="de Vries R.P."/>
            <person name="Dyer P.S."/>
            <person name="Fillinger S."/>
            <person name="Fournier E."/>
            <person name="Gout L."/>
            <person name="Hahn M."/>
            <person name="Kohn L."/>
            <person name="Lapalu N."/>
            <person name="Plummer K.M."/>
            <person name="Pradier J.-M."/>
            <person name="Quevillon E."/>
            <person name="Sharon A."/>
            <person name="Simon A."/>
            <person name="ten Have A."/>
            <person name="Tudzynski B."/>
            <person name="Tudzynski P."/>
            <person name="Wincker P."/>
            <person name="Andrew M."/>
            <person name="Anthouard V."/>
            <person name="Beever R.E."/>
            <person name="Beffa R."/>
            <person name="Benoit I."/>
            <person name="Bouzid O."/>
            <person name="Brault B."/>
            <person name="Chen Z."/>
            <person name="Choquer M."/>
            <person name="Collemare J."/>
            <person name="Cotton P."/>
            <person name="Danchin E.G."/>
            <person name="Da Silva C."/>
            <person name="Gautier A."/>
            <person name="Giraud C."/>
            <person name="Giraud T."/>
            <person name="Gonzalez C."/>
            <person name="Grossetete S."/>
            <person name="Gueldener U."/>
            <person name="Henrissat B."/>
            <person name="Howlett B.J."/>
            <person name="Kodira C."/>
            <person name="Kretschmer M."/>
            <person name="Lappartient A."/>
            <person name="Leroch M."/>
            <person name="Levis C."/>
            <person name="Mauceli E."/>
            <person name="Neuveglise C."/>
            <person name="Oeser B."/>
            <person name="Pearson M."/>
            <person name="Poulain J."/>
            <person name="Poussereau N."/>
            <person name="Quesneville H."/>
            <person name="Rascle C."/>
            <person name="Schumacher J."/>
            <person name="Segurens B."/>
            <person name="Sexton A."/>
            <person name="Silva E."/>
            <person name="Sirven C."/>
            <person name="Soanes D.M."/>
            <person name="Talbot N.J."/>
            <person name="Templeton M."/>
            <person name="Yandava C."/>
            <person name="Yarden O."/>
            <person name="Zeng Q."/>
            <person name="Rollins J.A."/>
            <person name="Lebrun M.-H."/>
            <person name="Dickman M."/>
        </authorList>
    </citation>
    <scope>NUCLEOTIDE SEQUENCE [LARGE SCALE GENOMIC DNA]</scope>
    <source>
        <strain>B05.10</strain>
    </source>
</reference>
<reference key="2">
    <citation type="journal article" date="2012" name="Eukaryot. Cell">
        <title>Genome update of Botrytis cinerea strains B05.10 and T4.</title>
        <authorList>
            <person name="Staats M."/>
            <person name="van Kan J.A.L."/>
        </authorList>
    </citation>
    <scope>NUCLEOTIDE SEQUENCE [LARGE SCALE GENOMIC DNA]</scope>
    <scope>GENOME REANNOTATION</scope>
    <source>
        <strain>B05.10</strain>
    </source>
</reference>
<reference key="3">
    <citation type="journal article" date="2017" name="Mol. Plant Pathol.">
        <title>A gapless genome sequence of the fungus Botrytis cinerea.</title>
        <authorList>
            <person name="van Kan J.A.L."/>
            <person name="Stassen J.H.M."/>
            <person name="Mosbach A."/>
            <person name="van der Lee T.A.J."/>
            <person name="Faino L."/>
            <person name="Farmer A.D."/>
            <person name="Papasotiriou D.G."/>
            <person name="Zhou S."/>
            <person name="Seidl M.F."/>
            <person name="Cottam E."/>
            <person name="Edel D."/>
            <person name="Hahn M."/>
            <person name="Schwartz D.C."/>
            <person name="Dietrich R.A."/>
            <person name="Widdison S."/>
            <person name="Scalliet G."/>
        </authorList>
    </citation>
    <scope>NUCLEOTIDE SEQUENCE [LARGE SCALE GENOMIC DNA]</scope>
    <scope>GENOME REANNOTATION</scope>
    <source>
        <strain>B05.10</strain>
    </source>
</reference>
<feature type="chain" id="PRO_0000330056" description="Mitochondrial inner membrane protease atp23">
    <location>
        <begin position="1"/>
        <end position="244"/>
    </location>
</feature>
<feature type="region of interest" description="Disordered" evidence="3">
    <location>
        <begin position="1"/>
        <end position="25"/>
    </location>
</feature>
<feature type="active site" evidence="2">
    <location>
        <position position="145"/>
    </location>
</feature>
<feature type="binding site" evidence="1">
    <location>
        <position position="144"/>
    </location>
    <ligand>
        <name>a divalent metal cation</name>
        <dbReference type="ChEBI" id="CHEBI:60240"/>
        <note>catalytic</note>
    </ligand>
</feature>
<feature type="binding site" evidence="1">
    <location>
        <position position="148"/>
    </location>
    <ligand>
        <name>a divalent metal cation</name>
        <dbReference type="ChEBI" id="CHEBI:60240"/>
        <note>catalytic</note>
    </ligand>
</feature>
<comment type="function">
    <text evidence="1">Has a dual role in the assembly of mitochondrial ATPase. Acts as a protease that removes N-terminal residues of mitochondrial ATPase CF(0) subunit 6 at the intermembrane space side. Also involved in the correct assembly of the membrane-embedded ATPase CF(0) particle, probably mediating association of subunit 6 with the subunit 9 ring (By similarity).</text>
</comment>
<comment type="subcellular location">
    <subcellularLocation>
        <location>Mitochondrion inner membrane</location>
        <topology>Peripheral membrane protein</topology>
        <orientation>Intermembrane side</orientation>
    </subcellularLocation>
    <text evidence="1">Associates loosely with the inner membrane.</text>
</comment>
<comment type="similarity">
    <text evidence="4">Belongs to the peptidase M76 family.</text>
</comment>